<name>WNT1_SCEOC</name>
<organism>
    <name type="scientific">Sceloporus occidentalis</name>
    <name type="common">Western fence lizard</name>
    <dbReference type="NCBI Taxonomy" id="8519"/>
    <lineage>
        <taxon>Eukaryota</taxon>
        <taxon>Metazoa</taxon>
        <taxon>Chordata</taxon>
        <taxon>Craniata</taxon>
        <taxon>Vertebrata</taxon>
        <taxon>Euteleostomi</taxon>
        <taxon>Lepidosauria</taxon>
        <taxon>Squamata</taxon>
        <taxon>Bifurcata</taxon>
        <taxon>Unidentata</taxon>
        <taxon>Episquamata</taxon>
        <taxon>Toxicofera</taxon>
        <taxon>Iguania</taxon>
        <taxon>Phrynosomatidae</taxon>
        <taxon>Phrynosomatinae</taxon>
        <taxon>Sceloporus</taxon>
    </lineage>
</organism>
<feature type="chain" id="PRO_0000200606" description="Protein Wnt-1">
    <location>
        <begin position="1" status="less than"/>
        <end position="126" status="greater than"/>
    </location>
</feature>
<feature type="lipid moiety-binding region" description="O-palmitoleoyl serine; by PORCN" evidence="5">
    <location>
        <position position="1"/>
    </location>
</feature>
<feature type="glycosylation site" description="N-linked (GlcNAc...) asparagine" evidence="6">
    <location>
        <position position="93"/>
    </location>
</feature>
<feature type="glycosylation site" description="N-linked (GlcNAc...) asparagine" evidence="6">
    <location>
        <position position="123"/>
    </location>
</feature>
<feature type="disulfide bond" evidence="3">
    <location>
        <begin position="92"/>
        <end position="107"/>
    </location>
</feature>
<feature type="non-terminal residue">
    <location>
        <position position="1"/>
    </location>
</feature>
<feature type="non-terminal residue">
    <location>
        <position position="126"/>
    </location>
</feature>
<accession>P28141</accession>
<reference key="1">
    <citation type="journal article" date="1992" name="Proc. Natl. Acad. Sci. U.S.A.">
        <title>Diversification of the Wnt gene family on the ancestral lineage of vertebrates.</title>
        <authorList>
            <person name="Sidow A."/>
        </authorList>
    </citation>
    <scope>NUCLEOTIDE SEQUENCE [GENOMIC DNA]</scope>
</reference>
<sequence length="126" mass="13934">SGSCTVKTCWMRLPTFRTVGDFLKDRFDGASRVIYGNKGSNRASRVELHHLEPENPAHKPPSPVDLVYFEKSPNFCTYSGKTGTVGTAGRSCNSSSPALDGCELLCCGRGYRTRMQRVTERCNCTF</sequence>
<gene>
    <name type="primary">WNT-1</name>
</gene>
<dbReference type="EMBL" id="M91298">
    <property type="protein sequence ID" value="AAA49541.1"/>
    <property type="molecule type" value="Genomic_DNA"/>
</dbReference>
<dbReference type="SMR" id="P28141"/>
<dbReference type="GlyCosmos" id="P28141">
    <property type="glycosylation" value="2 sites, No reported glycans"/>
</dbReference>
<dbReference type="GO" id="GO:0005615">
    <property type="term" value="C:extracellular space"/>
    <property type="evidence" value="ECO:0007669"/>
    <property type="project" value="TreeGrafter"/>
</dbReference>
<dbReference type="GO" id="GO:0005125">
    <property type="term" value="F:cytokine activity"/>
    <property type="evidence" value="ECO:0007669"/>
    <property type="project" value="TreeGrafter"/>
</dbReference>
<dbReference type="GO" id="GO:0005109">
    <property type="term" value="F:frizzled binding"/>
    <property type="evidence" value="ECO:0007669"/>
    <property type="project" value="TreeGrafter"/>
</dbReference>
<dbReference type="GO" id="GO:0060070">
    <property type="term" value="P:canonical Wnt signaling pathway"/>
    <property type="evidence" value="ECO:0007669"/>
    <property type="project" value="TreeGrafter"/>
</dbReference>
<dbReference type="GO" id="GO:0045165">
    <property type="term" value="P:cell fate commitment"/>
    <property type="evidence" value="ECO:0007669"/>
    <property type="project" value="TreeGrafter"/>
</dbReference>
<dbReference type="GO" id="GO:0030182">
    <property type="term" value="P:neuron differentiation"/>
    <property type="evidence" value="ECO:0007669"/>
    <property type="project" value="TreeGrafter"/>
</dbReference>
<dbReference type="Gene3D" id="3.30.2460.20">
    <property type="match status" value="1"/>
</dbReference>
<dbReference type="InterPro" id="IPR005817">
    <property type="entry name" value="Wnt"/>
</dbReference>
<dbReference type="InterPro" id="IPR009139">
    <property type="entry name" value="Wnt1"/>
</dbReference>
<dbReference type="InterPro" id="IPR043158">
    <property type="entry name" value="Wnt_C"/>
</dbReference>
<dbReference type="PANTHER" id="PTHR12027:SF91">
    <property type="entry name" value="PROTO-ONCOGENE WNT-1"/>
    <property type="match status" value="1"/>
</dbReference>
<dbReference type="PANTHER" id="PTHR12027">
    <property type="entry name" value="WNT RELATED"/>
    <property type="match status" value="1"/>
</dbReference>
<dbReference type="Pfam" id="PF00110">
    <property type="entry name" value="wnt"/>
    <property type="match status" value="1"/>
</dbReference>
<dbReference type="PRINTS" id="PR01841">
    <property type="entry name" value="WNT1PROTEIN"/>
</dbReference>
<dbReference type="SMART" id="SM00097">
    <property type="entry name" value="WNT1"/>
    <property type="match status" value="1"/>
</dbReference>
<protein>
    <recommendedName>
        <fullName>Protein Wnt-1</fullName>
    </recommendedName>
</protein>
<comment type="function">
    <text evidence="1 2">Ligand for members of the frizzled family of seven transmembrane receptors. Acts in the canonical Wnt signaling pathway by promoting beta-catenin-dependent transcriptional activation (By similarity). Plays an essential role in the development of the embryonic brain and central nervous system (CNS) (By similarity). Has a role in osteoblast function, bone development and bone homeostasis (By similarity).</text>
</comment>
<comment type="subcellular location">
    <subcellularLocation>
        <location evidence="2">Secreted</location>
        <location evidence="2">Extracellular space</location>
        <location evidence="2">Extracellular matrix</location>
    </subcellularLocation>
    <subcellularLocation>
        <location evidence="2">Secreted</location>
    </subcellularLocation>
</comment>
<comment type="PTM">
    <text evidence="4 5">Palmitoleoylation is required for efficient binding to frizzled receptors. Palmitoleoylation is necessary for proper trafficking to cell surface (By similarity). Depalmitoleoylated by NOTUM, leading to inhibit Wnt signaling pathway (By similarity).</text>
</comment>
<comment type="similarity">
    <text evidence="7">Belongs to the Wnt family.</text>
</comment>
<proteinExistence type="inferred from homology"/>
<evidence type="ECO:0000250" key="1">
    <source>
        <dbReference type="UniProtKB" id="P04426"/>
    </source>
</evidence>
<evidence type="ECO:0000250" key="2">
    <source>
        <dbReference type="UniProtKB" id="P04628"/>
    </source>
</evidence>
<evidence type="ECO:0000250" key="3">
    <source>
        <dbReference type="UniProtKB" id="P28026"/>
    </source>
</evidence>
<evidence type="ECO:0000250" key="4">
    <source>
        <dbReference type="UniProtKB" id="P56704"/>
    </source>
</evidence>
<evidence type="ECO:0000250" key="5">
    <source>
        <dbReference type="UniProtKB" id="Q91029"/>
    </source>
</evidence>
<evidence type="ECO:0000255" key="6"/>
<evidence type="ECO:0000305" key="7"/>
<keyword id="KW-0217">Developmental protein</keyword>
<keyword id="KW-1015">Disulfide bond</keyword>
<keyword id="KW-0272">Extracellular matrix</keyword>
<keyword id="KW-0325">Glycoprotein</keyword>
<keyword id="KW-0449">Lipoprotein</keyword>
<keyword id="KW-0964">Secreted</keyword>
<keyword id="KW-0879">Wnt signaling pathway</keyword>